<name>RL27_ECO55</name>
<sequence>MAHKKAGGSTRNGRDSEAKRLGVKRFGGESVLAGSIIVRQRGTKFHAGANVGCGRDHTLFAKADGKVKFEVKGPKNRKFISIEAE</sequence>
<keyword id="KW-1185">Reference proteome</keyword>
<keyword id="KW-0687">Ribonucleoprotein</keyword>
<keyword id="KW-0689">Ribosomal protein</keyword>
<protein>
    <recommendedName>
        <fullName evidence="1">Large ribosomal subunit protein bL27</fullName>
    </recommendedName>
    <alternativeName>
        <fullName evidence="3">50S ribosomal protein L27</fullName>
    </alternativeName>
</protein>
<gene>
    <name evidence="1" type="primary">rpmA</name>
    <name type="ordered locus">EC55989_3603</name>
</gene>
<dbReference type="EMBL" id="CU928145">
    <property type="protein sequence ID" value="CAU99824.1"/>
    <property type="molecule type" value="Genomic_DNA"/>
</dbReference>
<dbReference type="RefSeq" id="WP_000940595.1">
    <property type="nucleotide sequence ID" value="NZ_CP028304.1"/>
</dbReference>
<dbReference type="SMR" id="B7LHP5"/>
<dbReference type="GeneID" id="93778796"/>
<dbReference type="KEGG" id="eck:EC55989_3603"/>
<dbReference type="HOGENOM" id="CLU_095424_4_1_6"/>
<dbReference type="Proteomes" id="UP000000746">
    <property type="component" value="Chromosome"/>
</dbReference>
<dbReference type="GO" id="GO:0022625">
    <property type="term" value="C:cytosolic large ribosomal subunit"/>
    <property type="evidence" value="ECO:0007669"/>
    <property type="project" value="TreeGrafter"/>
</dbReference>
<dbReference type="GO" id="GO:0003735">
    <property type="term" value="F:structural constituent of ribosome"/>
    <property type="evidence" value="ECO:0007669"/>
    <property type="project" value="InterPro"/>
</dbReference>
<dbReference type="GO" id="GO:0006412">
    <property type="term" value="P:translation"/>
    <property type="evidence" value="ECO:0007669"/>
    <property type="project" value="UniProtKB-UniRule"/>
</dbReference>
<dbReference type="FunFam" id="2.40.50.100:FF:000001">
    <property type="entry name" value="50S ribosomal protein L27"/>
    <property type="match status" value="1"/>
</dbReference>
<dbReference type="Gene3D" id="2.40.50.100">
    <property type="match status" value="1"/>
</dbReference>
<dbReference type="HAMAP" id="MF_00539">
    <property type="entry name" value="Ribosomal_bL27"/>
    <property type="match status" value="1"/>
</dbReference>
<dbReference type="InterPro" id="IPR001684">
    <property type="entry name" value="Ribosomal_bL27"/>
</dbReference>
<dbReference type="InterPro" id="IPR018261">
    <property type="entry name" value="Ribosomal_bL27_CS"/>
</dbReference>
<dbReference type="NCBIfam" id="TIGR00062">
    <property type="entry name" value="L27"/>
    <property type="match status" value="1"/>
</dbReference>
<dbReference type="PANTHER" id="PTHR15893:SF0">
    <property type="entry name" value="LARGE RIBOSOMAL SUBUNIT PROTEIN BL27M"/>
    <property type="match status" value="1"/>
</dbReference>
<dbReference type="PANTHER" id="PTHR15893">
    <property type="entry name" value="RIBOSOMAL PROTEIN L27"/>
    <property type="match status" value="1"/>
</dbReference>
<dbReference type="Pfam" id="PF01016">
    <property type="entry name" value="Ribosomal_L27"/>
    <property type="match status" value="1"/>
</dbReference>
<dbReference type="PRINTS" id="PR00063">
    <property type="entry name" value="RIBOSOMALL27"/>
</dbReference>
<dbReference type="SUPFAM" id="SSF110324">
    <property type="entry name" value="Ribosomal L27 protein-like"/>
    <property type="match status" value="1"/>
</dbReference>
<dbReference type="PROSITE" id="PS00831">
    <property type="entry name" value="RIBOSOMAL_L27"/>
    <property type="match status" value="1"/>
</dbReference>
<evidence type="ECO:0000255" key="1">
    <source>
        <dbReference type="HAMAP-Rule" id="MF_00539"/>
    </source>
</evidence>
<evidence type="ECO:0000256" key="2">
    <source>
        <dbReference type="SAM" id="MobiDB-lite"/>
    </source>
</evidence>
<evidence type="ECO:0000305" key="3"/>
<proteinExistence type="inferred from homology"/>
<feature type="chain" id="PRO_1000146530" description="Large ribosomal subunit protein bL27">
    <location>
        <begin position="1"/>
        <end position="85"/>
    </location>
</feature>
<feature type="region of interest" description="Disordered" evidence="2">
    <location>
        <begin position="1"/>
        <end position="20"/>
    </location>
</feature>
<comment type="similarity">
    <text evidence="1">Belongs to the bacterial ribosomal protein bL27 family.</text>
</comment>
<organism>
    <name type="scientific">Escherichia coli (strain 55989 / EAEC)</name>
    <dbReference type="NCBI Taxonomy" id="585055"/>
    <lineage>
        <taxon>Bacteria</taxon>
        <taxon>Pseudomonadati</taxon>
        <taxon>Pseudomonadota</taxon>
        <taxon>Gammaproteobacteria</taxon>
        <taxon>Enterobacterales</taxon>
        <taxon>Enterobacteriaceae</taxon>
        <taxon>Escherichia</taxon>
    </lineage>
</organism>
<accession>B7LHP5</accession>
<reference key="1">
    <citation type="journal article" date="2009" name="PLoS Genet.">
        <title>Organised genome dynamics in the Escherichia coli species results in highly diverse adaptive paths.</title>
        <authorList>
            <person name="Touchon M."/>
            <person name="Hoede C."/>
            <person name="Tenaillon O."/>
            <person name="Barbe V."/>
            <person name="Baeriswyl S."/>
            <person name="Bidet P."/>
            <person name="Bingen E."/>
            <person name="Bonacorsi S."/>
            <person name="Bouchier C."/>
            <person name="Bouvet O."/>
            <person name="Calteau A."/>
            <person name="Chiapello H."/>
            <person name="Clermont O."/>
            <person name="Cruveiller S."/>
            <person name="Danchin A."/>
            <person name="Diard M."/>
            <person name="Dossat C."/>
            <person name="Karoui M.E."/>
            <person name="Frapy E."/>
            <person name="Garry L."/>
            <person name="Ghigo J.M."/>
            <person name="Gilles A.M."/>
            <person name="Johnson J."/>
            <person name="Le Bouguenec C."/>
            <person name="Lescat M."/>
            <person name="Mangenot S."/>
            <person name="Martinez-Jehanne V."/>
            <person name="Matic I."/>
            <person name="Nassif X."/>
            <person name="Oztas S."/>
            <person name="Petit M.A."/>
            <person name="Pichon C."/>
            <person name="Rouy Z."/>
            <person name="Ruf C.S."/>
            <person name="Schneider D."/>
            <person name="Tourret J."/>
            <person name="Vacherie B."/>
            <person name="Vallenet D."/>
            <person name="Medigue C."/>
            <person name="Rocha E.P.C."/>
            <person name="Denamur E."/>
        </authorList>
    </citation>
    <scope>NUCLEOTIDE SEQUENCE [LARGE SCALE GENOMIC DNA]</scope>
    <source>
        <strain>55989 / EAEC</strain>
    </source>
</reference>